<accession>Q4FRK6</accession>
<dbReference type="EC" id="3.6.5.-" evidence="1"/>
<dbReference type="EMBL" id="CP000082">
    <property type="protein sequence ID" value="AAZ19352.1"/>
    <property type="molecule type" value="Genomic_DNA"/>
</dbReference>
<dbReference type="RefSeq" id="WP_011280769.1">
    <property type="nucleotide sequence ID" value="NC_007204.1"/>
</dbReference>
<dbReference type="SMR" id="Q4FRK6"/>
<dbReference type="STRING" id="259536.Psyc_1504"/>
<dbReference type="KEGG" id="par:Psyc_1504"/>
<dbReference type="eggNOG" id="COG0536">
    <property type="taxonomic scope" value="Bacteria"/>
</dbReference>
<dbReference type="HOGENOM" id="CLU_011747_2_0_6"/>
<dbReference type="OrthoDB" id="9807318at2"/>
<dbReference type="Proteomes" id="UP000000546">
    <property type="component" value="Chromosome"/>
</dbReference>
<dbReference type="GO" id="GO:0005737">
    <property type="term" value="C:cytoplasm"/>
    <property type="evidence" value="ECO:0007669"/>
    <property type="project" value="UniProtKB-SubCell"/>
</dbReference>
<dbReference type="GO" id="GO:0005525">
    <property type="term" value="F:GTP binding"/>
    <property type="evidence" value="ECO:0007669"/>
    <property type="project" value="UniProtKB-UniRule"/>
</dbReference>
<dbReference type="GO" id="GO:0003924">
    <property type="term" value="F:GTPase activity"/>
    <property type="evidence" value="ECO:0007669"/>
    <property type="project" value="UniProtKB-UniRule"/>
</dbReference>
<dbReference type="GO" id="GO:0000287">
    <property type="term" value="F:magnesium ion binding"/>
    <property type="evidence" value="ECO:0007669"/>
    <property type="project" value="InterPro"/>
</dbReference>
<dbReference type="GO" id="GO:0042254">
    <property type="term" value="P:ribosome biogenesis"/>
    <property type="evidence" value="ECO:0007669"/>
    <property type="project" value="UniProtKB-UniRule"/>
</dbReference>
<dbReference type="CDD" id="cd01898">
    <property type="entry name" value="Obg"/>
    <property type="match status" value="1"/>
</dbReference>
<dbReference type="FunFam" id="2.70.210.12:FF:000001">
    <property type="entry name" value="GTPase Obg"/>
    <property type="match status" value="1"/>
</dbReference>
<dbReference type="Gene3D" id="2.70.210.12">
    <property type="entry name" value="GTP1/OBG domain"/>
    <property type="match status" value="1"/>
</dbReference>
<dbReference type="Gene3D" id="3.40.50.300">
    <property type="entry name" value="P-loop containing nucleotide triphosphate hydrolases"/>
    <property type="match status" value="1"/>
</dbReference>
<dbReference type="HAMAP" id="MF_01454">
    <property type="entry name" value="GTPase_Obg"/>
    <property type="match status" value="1"/>
</dbReference>
<dbReference type="InterPro" id="IPR031167">
    <property type="entry name" value="G_OBG"/>
</dbReference>
<dbReference type="InterPro" id="IPR006073">
    <property type="entry name" value="GTP-bd"/>
</dbReference>
<dbReference type="InterPro" id="IPR014100">
    <property type="entry name" value="GTP-bd_Obg/CgtA"/>
</dbReference>
<dbReference type="InterPro" id="IPR006074">
    <property type="entry name" value="GTP1-OBG_CS"/>
</dbReference>
<dbReference type="InterPro" id="IPR006169">
    <property type="entry name" value="GTP1_OBG_dom"/>
</dbReference>
<dbReference type="InterPro" id="IPR036726">
    <property type="entry name" value="GTP1_OBG_dom_sf"/>
</dbReference>
<dbReference type="InterPro" id="IPR045086">
    <property type="entry name" value="OBG_GTPase"/>
</dbReference>
<dbReference type="InterPro" id="IPR027417">
    <property type="entry name" value="P-loop_NTPase"/>
</dbReference>
<dbReference type="NCBIfam" id="TIGR02729">
    <property type="entry name" value="Obg_CgtA"/>
    <property type="match status" value="1"/>
</dbReference>
<dbReference type="NCBIfam" id="NF008955">
    <property type="entry name" value="PRK12297.1"/>
    <property type="match status" value="1"/>
</dbReference>
<dbReference type="NCBIfam" id="NF008956">
    <property type="entry name" value="PRK12299.1"/>
    <property type="match status" value="1"/>
</dbReference>
<dbReference type="PANTHER" id="PTHR11702">
    <property type="entry name" value="DEVELOPMENTALLY REGULATED GTP-BINDING PROTEIN-RELATED"/>
    <property type="match status" value="1"/>
</dbReference>
<dbReference type="PANTHER" id="PTHR11702:SF31">
    <property type="entry name" value="MITOCHONDRIAL RIBOSOME-ASSOCIATED GTPASE 2"/>
    <property type="match status" value="1"/>
</dbReference>
<dbReference type="Pfam" id="PF01018">
    <property type="entry name" value="GTP1_OBG"/>
    <property type="match status" value="1"/>
</dbReference>
<dbReference type="Pfam" id="PF01926">
    <property type="entry name" value="MMR_HSR1"/>
    <property type="match status" value="1"/>
</dbReference>
<dbReference type="PIRSF" id="PIRSF002401">
    <property type="entry name" value="GTP_bd_Obg/CgtA"/>
    <property type="match status" value="1"/>
</dbReference>
<dbReference type="PRINTS" id="PR00326">
    <property type="entry name" value="GTP1OBG"/>
</dbReference>
<dbReference type="SUPFAM" id="SSF82051">
    <property type="entry name" value="Obg GTP-binding protein N-terminal domain"/>
    <property type="match status" value="1"/>
</dbReference>
<dbReference type="SUPFAM" id="SSF52540">
    <property type="entry name" value="P-loop containing nucleoside triphosphate hydrolases"/>
    <property type="match status" value="1"/>
</dbReference>
<dbReference type="PROSITE" id="PS51710">
    <property type="entry name" value="G_OBG"/>
    <property type="match status" value="1"/>
</dbReference>
<dbReference type="PROSITE" id="PS00905">
    <property type="entry name" value="GTP1_OBG"/>
    <property type="match status" value="1"/>
</dbReference>
<dbReference type="PROSITE" id="PS51883">
    <property type="entry name" value="OBG"/>
    <property type="match status" value="1"/>
</dbReference>
<keyword id="KW-0963">Cytoplasm</keyword>
<keyword id="KW-0342">GTP-binding</keyword>
<keyword id="KW-0378">Hydrolase</keyword>
<keyword id="KW-0460">Magnesium</keyword>
<keyword id="KW-0479">Metal-binding</keyword>
<keyword id="KW-0547">Nucleotide-binding</keyword>
<keyword id="KW-1185">Reference proteome</keyword>
<proteinExistence type="inferred from homology"/>
<evidence type="ECO:0000255" key="1">
    <source>
        <dbReference type="HAMAP-Rule" id="MF_01454"/>
    </source>
</evidence>
<evidence type="ECO:0000255" key="2">
    <source>
        <dbReference type="PROSITE-ProRule" id="PRU01231"/>
    </source>
</evidence>
<evidence type="ECO:0000256" key="3">
    <source>
        <dbReference type="SAM" id="MobiDB-lite"/>
    </source>
</evidence>
<gene>
    <name evidence="1" type="primary">obg</name>
    <name type="ordered locus">Psyc_1504</name>
</gene>
<reference key="1">
    <citation type="journal article" date="2010" name="Appl. Environ. Microbiol.">
        <title>The genome sequence of Psychrobacter arcticus 273-4, a psychroactive Siberian permafrost bacterium, reveals mechanisms for adaptation to low-temperature growth.</title>
        <authorList>
            <person name="Ayala-del-Rio H.L."/>
            <person name="Chain P.S."/>
            <person name="Grzymski J.J."/>
            <person name="Ponder M.A."/>
            <person name="Ivanova N."/>
            <person name="Bergholz P.W."/>
            <person name="Di Bartolo G."/>
            <person name="Hauser L."/>
            <person name="Land M."/>
            <person name="Bakermans C."/>
            <person name="Rodrigues D."/>
            <person name="Klappenbach J."/>
            <person name="Zarka D."/>
            <person name="Larimer F."/>
            <person name="Richardson P."/>
            <person name="Murray A."/>
            <person name="Thomashow M."/>
            <person name="Tiedje J.M."/>
        </authorList>
    </citation>
    <scope>NUCLEOTIDE SEQUENCE [LARGE SCALE GENOMIC DNA]</scope>
    <source>
        <strain>DSM 17307 / VKM B-2377 / 273-4</strain>
    </source>
</reference>
<name>OBG_PSYA2</name>
<comment type="function">
    <text evidence="1">An essential GTPase which binds GTP, GDP and possibly (p)ppGpp with moderate affinity, with high nucleotide exchange rates and a fairly low GTP hydrolysis rate. Plays a role in control of the cell cycle, stress response, ribosome biogenesis and in those bacteria that undergo differentiation, in morphogenesis control.</text>
</comment>
<comment type="cofactor">
    <cofactor evidence="1">
        <name>Mg(2+)</name>
        <dbReference type="ChEBI" id="CHEBI:18420"/>
    </cofactor>
</comment>
<comment type="subunit">
    <text evidence="1">Monomer.</text>
</comment>
<comment type="subcellular location">
    <subcellularLocation>
        <location evidence="1">Cytoplasm</location>
    </subcellularLocation>
</comment>
<comment type="similarity">
    <text evidence="1">Belongs to the TRAFAC class OBG-HflX-like GTPase superfamily. OBG GTPase family.</text>
</comment>
<feature type="chain" id="PRO_0000386165" description="GTPase Obg">
    <location>
        <begin position="1"/>
        <end position="405"/>
    </location>
</feature>
<feature type="domain" description="Obg" evidence="2">
    <location>
        <begin position="1"/>
        <end position="159"/>
    </location>
</feature>
<feature type="domain" description="OBG-type G" evidence="1">
    <location>
        <begin position="160"/>
        <end position="333"/>
    </location>
</feature>
<feature type="region of interest" description="Disordered" evidence="3">
    <location>
        <begin position="371"/>
        <end position="405"/>
    </location>
</feature>
<feature type="compositionally biased region" description="Basic and acidic residues" evidence="3">
    <location>
        <begin position="371"/>
        <end position="382"/>
    </location>
</feature>
<feature type="compositionally biased region" description="Acidic residues" evidence="3">
    <location>
        <begin position="383"/>
        <end position="399"/>
    </location>
</feature>
<feature type="binding site" evidence="1">
    <location>
        <begin position="166"/>
        <end position="173"/>
    </location>
    <ligand>
        <name>GTP</name>
        <dbReference type="ChEBI" id="CHEBI:37565"/>
    </ligand>
</feature>
<feature type="binding site" evidence="1">
    <location>
        <position position="173"/>
    </location>
    <ligand>
        <name>Mg(2+)</name>
        <dbReference type="ChEBI" id="CHEBI:18420"/>
    </ligand>
</feature>
<feature type="binding site" evidence="1">
    <location>
        <begin position="191"/>
        <end position="195"/>
    </location>
    <ligand>
        <name>GTP</name>
        <dbReference type="ChEBI" id="CHEBI:37565"/>
    </ligand>
</feature>
<feature type="binding site" evidence="1">
    <location>
        <position position="193"/>
    </location>
    <ligand>
        <name>Mg(2+)</name>
        <dbReference type="ChEBI" id="CHEBI:18420"/>
    </ligand>
</feature>
<feature type="binding site" evidence="1">
    <location>
        <begin position="213"/>
        <end position="216"/>
    </location>
    <ligand>
        <name>GTP</name>
        <dbReference type="ChEBI" id="CHEBI:37565"/>
    </ligand>
</feature>
<feature type="binding site" evidence="1">
    <location>
        <begin position="283"/>
        <end position="286"/>
    </location>
    <ligand>
        <name>GTP</name>
        <dbReference type="ChEBI" id="CHEBI:37565"/>
    </ligand>
</feature>
<feature type="binding site" evidence="1">
    <location>
        <begin position="314"/>
        <end position="316"/>
    </location>
    <ligand>
        <name>GTP</name>
        <dbReference type="ChEBI" id="CHEBI:37565"/>
    </ligand>
</feature>
<sequence length="405" mass="44206">MRFIDEAVVTVKAGDGGNGIASFRREKYVPRGGPDGGDGGKGGDVYVIAEDNTNTLVDYRYTRRHDAMRAENGHSRNCSGKGSDDLFLPVPIGTTIVDTETDEVLGDLIEIGQTLLIAKGGDGGLGNTHFKSSTNQAPRKATSGFEGELKVLKFELKVVADVGLIGLPNAGKSTFIRQVSAARPKVADYPFTTLVPNLGVVDIGRHRSFVMADIPGLIEGASEGAGLGIRFLKHVARTRRLLHLVDIKPIDGSDPVENARIILNELDRFSPELANLPQILVLNKIDQVPEEELNELCTHIVAELGWTGIVFRTATLTGEGVDAIKYHLMNEIEREREREIEDPIFAEAQKARFERLEAEVRLNTEAQREAYRAARKAAREGTDLSDDDFDGSDDDDDGVEVIYAP</sequence>
<protein>
    <recommendedName>
        <fullName evidence="1">GTPase Obg</fullName>
        <ecNumber evidence="1">3.6.5.-</ecNumber>
    </recommendedName>
    <alternativeName>
        <fullName evidence="1">GTP-binding protein Obg</fullName>
    </alternativeName>
</protein>
<organism>
    <name type="scientific">Psychrobacter arcticus (strain DSM 17307 / VKM B-2377 / 273-4)</name>
    <dbReference type="NCBI Taxonomy" id="259536"/>
    <lineage>
        <taxon>Bacteria</taxon>
        <taxon>Pseudomonadati</taxon>
        <taxon>Pseudomonadota</taxon>
        <taxon>Gammaproteobacteria</taxon>
        <taxon>Moraxellales</taxon>
        <taxon>Moraxellaceae</taxon>
        <taxon>Psychrobacter</taxon>
    </lineage>
</organism>